<protein>
    <recommendedName>
        <fullName evidence="1">5-oxoprolinase subunit A</fullName>
        <shortName evidence="1">5-OPase subunit A</shortName>
        <ecNumber evidence="1">3.5.2.9</ecNumber>
    </recommendedName>
    <alternativeName>
        <fullName evidence="1">5-oxoprolinase (ATP-hydrolyzing) subunit A</fullName>
    </alternativeName>
</protein>
<accession>Q743V5</accession>
<keyword id="KW-0067">ATP-binding</keyword>
<keyword id="KW-0378">Hydrolase</keyword>
<keyword id="KW-0547">Nucleotide-binding</keyword>
<keyword id="KW-1185">Reference proteome</keyword>
<evidence type="ECO:0000255" key="1">
    <source>
        <dbReference type="HAMAP-Rule" id="MF_00691"/>
    </source>
</evidence>
<proteinExistence type="inferred from homology"/>
<reference key="1">
    <citation type="journal article" date="2005" name="Proc. Natl. Acad. Sci. U.S.A.">
        <title>The complete genome sequence of Mycobacterium avium subspecies paratuberculosis.</title>
        <authorList>
            <person name="Li L."/>
            <person name="Bannantine J.P."/>
            <person name="Zhang Q."/>
            <person name="Amonsin A."/>
            <person name="May B.J."/>
            <person name="Alt D."/>
            <person name="Banerji N."/>
            <person name="Kanjilal S."/>
            <person name="Kapur V."/>
        </authorList>
    </citation>
    <scope>NUCLEOTIDE SEQUENCE [LARGE SCALE GENOMIC DNA]</scope>
    <source>
        <strain>ATCC BAA-968 / K-10</strain>
    </source>
</reference>
<name>PXPA_MYCPA</name>
<comment type="function">
    <text evidence="1">Catalyzes the cleavage of 5-oxoproline to form L-glutamate coupled to the hydrolysis of ATP to ADP and inorganic phosphate.</text>
</comment>
<comment type="catalytic activity">
    <reaction evidence="1">
        <text>5-oxo-L-proline + ATP + 2 H2O = L-glutamate + ADP + phosphate + H(+)</text>
        <dbReference type="Rhea" id="RHEA:10348"/>
        <dbReference type="ChEBI" id="CHEBI:15377"/>
        <dbReference type="ChEBI" id="CHEBI:15378"/>
        <dbReference type="ChEBI" id="CHEBI:29985"/>
        <dbReference type="ChEBI" id="CHEBI:30616"/>
        <dbReference type="ChEBI" id="CHEBI:43474"/>
        <dbReference type="ChEBI" id="CHEBI:58402"/>
        <dbReference type="ChEBI" id="CHEBI:456216"/>
        <dbReference type="EC" id="3.5.2.9"/>
    </reaction>
</comment>
<comment type="subunit">
    <text evidence="1">Forms a complex composed of PxpA, PxpB and PxpC.</text>
</comment>
<comment type="similarity">
    <text evidence="1">Belongs to the LamB/PxpA family.</text>
</comment>
<sequence length="252" mass="26120">MAGIDLNADLGEGFGVWRLGDDDAMLGIVSSANVACGFHAGDPAGLLRVCRSAAERGVRVGAQVSYRDLAGFGRRFIDVAADELLADVVYQIGALQAIAHAAGSSVCYVKPHGALYNTIVTHPAQAAAVAEAVRLVDPGLPVLGMAGSVFFDEAARRGLRVVAEAFADRAYRPDGRLVSRREPGAVLADPAAIAERVLAMVDTGAVTAVNGTRLELSVESVCVHGDSPGAVQIATAVRDRLRAAGVEIRAFC</sequence>
<organism>
    <name type="scientific">Mycolicibacterium paratuberculosis (strain ATCC BAA-968 / K-10)</name>
    <name type="common">Mycobacterium paratuberculosis</name>
    <dbReference type="NCBI Taxonomy" id="262316"/>
    <lineage>
        <taxon>Bacteria</taxon>
        <taxon>Bacillati</taxon>
        <taxon>Actinomycetota</taxon>
        <taxon>Actinomycetes</taxon>
        <taxon>Mycobacteriales</taxon>
        <taxon>Mycobacteriaceae</taxon>
        <taxon>Mycobacterium</taxon>
        <taxon>Mycobacterium avium complex (MAC)</taxon>
    </lineage>
</organism>
<feature type="chain" id="PRO_0000185018" description="5-oxoprolinase subunit A">
    <location>
        <begin position="1"/>
        <end position="252"/>
    </location>
</feature>
<dbReference type="EC" id="3.5.2.9" evidence="1"/>
<dbReference type="EMBL" id="AE016958">
    <property type="protein sequence ID" value="AAS02803.1"/>
    <property type="molecule type" value="Genomic_DNA"/>
</dbReference>
<dbReference type="RefSeq" id="WP_003875643.1">
    <property type="nucleotide sequence ID" value="NZ_CP106873.1"/>
</dbReference>
<dbReference type="SMR" id="Q743V5"/>
<dbReference type="STRING" id="262316.MAP_0486c"/>
<dbReference type="KEGG" id="mpa:MAP_0486c"/>
<dbReference type="PATRIC" id="fig|262316.17.peg.516"/>
<dbReference type="eggNOG" id="COG1540">
    <property type="taxonomic scope" value="Bacteria"/>
</dbReference>
<dbReference type="HOGENOM" id="CLU_069535_0_0_11"/>
<dbReference type="Proteomes" id="UP000000580">
    <property type="component" value="Chromosome"/>
</dbReference>
<dbReference type="GO" id="GO:0017168">
    <property type="term" value="F:5-oxoprolinase (ATP-hydrolyzing) activity"/>
    <property type="evidence" value="ECO:0007669"/>
    <property type="project" value="UniProtKB-UniRule"/>
</dbReference>
<dbReference type="GO" id="GO:0005524">
    <property type="term" value="F:ATP binding"/>
    <property type="evidence" value="ECO:0007669"/>
    <property type="project" value="UniProtKB-UniRule"/>
</dbReference>
<dbReference type="GO" id="GO:0005975">
    <property type="term" value="P:carbohydrate metabolic process"/>
    <property type="evidence" value="ECO:0007669"/>
    <property type="project" value="InterPro"/>
</dbReference>
<dbReference type="CDD" id="cd10787">
    <property type="entry name" value="LamB_YcsF_like"/>
    <property type="match status" value="1"/>
</dbReference>
<dbReference type="Gene3D" id="3.20.20.370">
    <property type="entry name" value="Glycoside hydrolase/deacetylase"/>
    <property type="match status" value="1"/>
</dbReference>
<dbReference type="HAMAP" id="MF_00691">
    <property type="entry name" value="PxpA"/>
    <property type="match status" value="1"/>
</dbReference>
<dbReference type="InterPro" id="IPR011330">
    <property type="entry name" value="Glyco_hydro/deAcase_b/a-brl"/>
</dbReference>
<dbReference type="InterPro" id="IPR005501">
    <property type="entry name" value="LamB/YcsF/PxpA-like"/>
</dbReference>
<dbReference type="NCBIfam" id="NF003814">
    <property type="entry name" value="PRK05406.1-3"/>
    <property type="match status" value="1"/>
</dbReference>
<dbReference type="NCBIfam" id="NF003816">
    <property type="entry name" value="PRK05406.1-5"/>
    <property type="match status" value="1"/>
</dbReference>
<dbReference type="PANTHER" id="PTHR30292:SF0">
    <property type="entry name" value="5-OXOPROLINASE SUBUNIT A"/>
    <property type="match status" value="1"/>
</dbReference>
<dbReference type="PANTHER" id="PTHR30292">
    <property type="entry name" value="UNCHARACTERIZED PROTEIN YBGL-RELATED"/>
    <property type="match status" value="1"/>
</dbReference>
<dbReference type="Pfam" id="PF03746">
    <property type="entry name" value="LamB_YcsF"/>
    <property type="match status" value="1"/>
</dbReference>
<dbReference type="SUPFAM" id="SSF88713">
    <property type="entry name" value="Glycoside hydrolase/deacetylase"/>
    <property type="match status" value="1"/>
</dbReference>
<gene>
    <name evidence="1" type="primary">pxpA</name>
    <name type="ordered locus">MAP_0486c</name>
</gene>